<protein>
    <recommendedName>
        <fullName evidence="1">Proline--tRNA ligase</fullName>
        <ecNumber evidence="1">6.1.1.15</ecNumber>
    </recommendedName>
    <alternativeName>
        <fullName evidence="1">Prolyl-tRNA synthetase</fullName>
        <shortName evidence="1">ProRS</shortName>
    </alternativeName>
</protein>
<accession>Q8EUW7</accession>
<organism>
    <name type="scientific">Malacoplasma penetrans (strain HF-2)</name>
    <name type="common">Mycoplasma penetrans</name>
    <dbReference type="NCBI Taxonomy" id="272633"/>
    <lineage>
        <taxon>Bacteria</taxon>
        <taxon>Bacillati</taxon>
        <taxon>Mycoplasmatota</taxon>
        <taxon>Mycoplasmoidales</taxon>
        <taxon>Mycoplasmoidaceae</taxon>
        <taxon>Malacoplasma</taxon>
    </lineage>
</organism>
<feature type="chain" id="PRO_0000249139" description="Proline--tRNA ligase">
    <location>
        <begin position="1"/>
        <end position="470"/>
    </location>
</feature>
<gene>
    <name evidence="1" type="primary">proS</name>
    <name type="ordered locus">MYPE8010</name>
</gene>
<evidence type="ECO:0000255" key="1">
    <source>
        <dbReference type="HAMAP-Rule" id="MF_01571"/>
    </source>
</evidence>
<dbReference type="EC" id="6.1.1.15" evidence="1"/>
<dbReference type="EMBL" id="BA000026">
    <property type="protein sequence ID" value="BAC44594.1"/>
    <property type="molecule type" value="Genomic_DNA"/>
</dbReference>
<dbReference type="RefSeq" id="WP_011077623.1">
    <property type="nucleotide sequence ID" value="NC_004432.1"/>
</dbReference>
<dbReference type="SMR" id="Q8EUW7"/>
<dbReference type="STRING" id="272633.gene:10731923"/>
<dbReference type="KEGG" id="mpe:MYPE8010"/>
<dbReference type="eggNOG" id="COG0441">
    <property type="taxonomic scope" value="Bacteria"/>
</dbReference>
<dbReference type="HOGENOM" id="CLU_001882_4_2_14"/>
<dbReference type="InParanoid" id="Q8EUW7"/>
<dbReference type="Proteomes" id="UP000002522">
    <property type="component" value="Chromosome"/>
</dbReference>
<dbReference type="GO" id="GO:0017101">
    <property type="term" value="C:aminoacyl-tRNA synthetase multienzyme complex"/>
    <property type="evidence" value="ECO:0007669"/>
    <property type="project" value="TreeGrafter"/>
</dbReference>
<dbReference type="GO" id="GO:0005737">
    <property type="term" value="C:cytoplasm"/>
    <property type="evidence" value="ECO:0007669"/>
    <property type="project" value="UniProtKB-SubCell"/>
</dbReference>
<dbReference type="GO" id="GO:0005524">
    <property type="term" value="F:ATP binding"/>
    <property type="evidence" value="ECO:0007669"/>
    <property type="project" value="UniProtKB-UniRule"/>
</dbReference>
<dbReference type="GO" id="GO:0004827">
    <property type="term" value="F:proline-tRNA ligase activity"/>
    <property type="evidence" value="ECO:0007669"/>
    <property type="project" value="UniProtKB-UniRule"/>
</dbReference>
<dbReference type="GO" id="GO:0006433">
    <property type="term" value="P:prolyl-tRNA aminoacylation"/>
    <property type="evidence" value="ECO:0007669"/>
    <property type="project" value="UniProtKB-UniRule"/>
</dbReference>
<dbReference type="CDD" id="cd00778">
    <property type="entry name" value="ProRS_core_arch_euk"/>
    <property type="match status" value="1"/>
</dbReference>
<dbReference type="Gene3D" id="3.40.50.800">
    <property type="entry name" value="Anticodon-binding domain"/>
    <property type="match status" value="1"/>
</dbReference>
<dbReference type="Gene3D" id="3.30.930.10">
    <property type="entry name" value="Bira Bifunctional Protein, Domain 2"/>
    <property type="match status" value="1"/>
</dbReference>
<dbReference type="Gene3D" id="3.30.110.30">
    <property type="entry name" value="C-terminal domain of ProRS"/>
    <property type="match status" value="1"/>
</dbReference>
<dbReference type="HAMAP" id="MF_01571">
    <property type="entry name" value="Pro_tRNA_synth_type3"/>
    <property type="match status" value="1"/>
</dbReference>
<dbReference type="InterPro" id="IPR002314">
    <property type="entry name" value="aa-tRNA-synt_IIb"/>
</dbReference>
<dbReference type="InterPro" id="IPR006195">
    <property type="entry name" value="aa-tRNA-synth_II"/>
</dbReference>
<dbReference type="InterPro" id="IPR045864">
    <property type="entry name" value="aa-tRNA-synth_II/BPL/LPL"/>
</dbReference>
<dbReference type="InterPro" id="IPR004154">
    <property type="entry name" value="Anticodon-bd"/>
</dbReference>
<dbReference type="InterPro" id="IPR036621">
    <property type="entry name" value="Anticodon-bd_dom_sf"/>
</dbReference>
<dbReference type="InterPro" id="IPR002316">
    <property type="entry name" value="Pro-tRNA-ligase_IIa"/>
</dbReference>
<dbReference type="InterPro" id="IPR004499">
    <property type="entry name" value="Pro-tRNA-ligase_IIa_arc-type"/>
</dbReference>
<dbReference type="InterPro" id="IPR016061">
    <property type="entry name" value="Pro-tRNA_ligase_II_C"/>
</dbReference>
<dbReference type="InterPro" id="IPR017449">
    <property type="entry name" value="Pro-tRNA_synth_II"/>
</dbReference>
<dbReference type="InterPro" id="IPR033721">
    <property type="entry name" value="ProRS_core_arch_euk"/>
</dbReference>
<dbReference type="NCBIfam" id="TIGR00408">
    <property type="entry name" value="proS_fam_I"/>
    <property type="match status" value="1"/>
</dbReference>
<dbReference type="PANTHER" id="PTHR43382:SF2">
    <property type="entry name" value="BIFUNCTIONAL GLUTAMATE_PROLINE--TRNA LIGASE"/>
    <property type="match status" value="1"/>
</dbReference>
<dbReference type="PANTHER" id="PTHR43382">
    <property type="entry name" value="PROLYL-TRNA SYNTHETASE"/>
    <property type="match status" value="1"/>
</dbReference>
<dbReference type="Pfam" id="PF03129">
    <property type="entry name" value="HGTP_anticodon"/>
    <property type="match status" value="1"/>
</dbReference>
<dbReference type="Pfam" id="PF09180">
    <property type="entry name" value="ProRS-C_1"/>
    <property type="match status" value="1"/>
</dbReference>
<dbReference type="Pfam" id="PF00587">
    <property type="entry name" value="tRNA-synt_2b"/>
    <property type="match status" value="1"/>
</dbReference>
<dbReference type="PRINTS" id="PR01046">
    <property type="entry name" value="TRNASYNTHPRO"/>
</dbReference>
<dbReference type="SMART" id="SM00946">
    <property type="entry name" value="ProRS-C_1"/>
    <property type="match status" value="1"/>
</dbReference>
<dbReference type="SUPFAM" id="SSF64586">
    <property type="entry name" value="C-terminal domain of ProRS"/>
    <property type="match status" value="1"/>
</dbReference>
<dbReference type="SUPFAM" id="SSF52954">
    <property type="entry name" value="Class II aaRS ABD-related"/>
    <property type="match status" value="1"/>
</dbReference>
<dbReference type="SUPFAM" id="SSF55681">
    <property type="entry name" value="Class II aaRS and biotin synthetases"/>
    <property type="match status" value="1"/>
</dbReference>
<dbReference type="PROSITE" id="PS50862">
    <property type="entry name" value="AA_TRNA_LIGASE_II"/>
    <property type="match status" value="1"/>
</dbReference>
<name>SYP_MALP2</name>
<keyword id="KW-0030">Aminoacyl-tRNA synthetase</keyword>
<keyword id="KW-0067">ATP-binding</keyword>
<keyword id="KW-0963">Cytoplasm</keyword>
<keyword id="KW-0436">Ligase</keyword>
<keyword id="KW-0547">Nucleotide-binding</keyword>
<keyword id="KW-0648">Protein biosynthesis</keyword>
<keyword id="KW-1185">Reference proteome</keyword>
<sequence length="470" mass="54839">MSKIVKQEENFSKWYTSIIENANLVDYGLVKGTIMFKPYGFAIWKRIQEEFNKILVSLNTAEVCFPMLIPYSEFMKEKEHVEGFNPELFKVSHLGEKKLEDELVIRPTSEISFCNYFKKNIKSYNDLPCILNQWGSVFRVEKNTRPFLRTSEFLWQEQHAVFADKKEAFDFSITMVNEYKKFVNDYLSIAVLMGEKTENERFAGADNTFTIEALMPDGQVLQSATSHYLGTNFAKSYDLKYQTKNNNYDLMFQTSAGLSTRIIGAIIMSHSDNNGLVLPFKIAPIQFAIVTSNEVNKDSDELKAIYKNLFGYKYQTYFVEKSLGLQLQENEIKGIPFQLILGKKEIENNTITIYRRDTREKQNISFKEFNQNFIENLIKEYSSNLFNKTEKRLNSSIEFVNNIDEFKKALDNKKIISAYWSGNAEDEKKLKELTTATPRCFDWNQKIDKTKKCFFTNKPNAKLVYFARAY</sequence>
<comment type="function">
    <text evidence="1">Catalyzes the attachment of proline to tRNA(Pro) in a two-step reaction: proline is first activated by ATP to form Pro-AMP and then transferred to the acceptor end of tRNA(Pro).</text>
</comment>
<comment type="catalytic activity">
    <reaction evidence="1">
        <text>tRNA(Pro) + L-proline + ATP = L-prolyl-tRNA(Pro) + AMP + diphosphate</text>
        <dbReference type="Rhea" id="RHEA:14305"/>
        <dbReference type="Rhea" id="RHEA-COMP:9700"/>
        <dbReference type="Rhea" id="RHEA-COMP:9702"/>
        <dbReference type="ChEBI" id="CHEBI:30616"/>
        <dbReference type="ChEBI" id="CHEBI:33019"/>
        <dbReference type="ChEBI" id="CHEBI:60039"/>
        <dbReference type="ChEBI" id="CHEBI:78442"/>
        <dbReference type="ChEBI" id="CHEBI:78532"/>
        <dbReference type="ChEBI" id="CHEBI:456215"/>
        <dbReference type="EC" id="6.1.1.15"/>
    </reaction>
</comment>
<comment type="subunit">
    <text evidence="1">Homodimer.</text>
</comment>
<comment type="subcellular location">
    <subcellularLocation>
        <location evidence="1">Cytoplasm</location>
    </subcellularLocation>
</comment>
<comment type="domain">
    <text evidence="1">Consists of three domains: the N-terminal catalytic domain, the anticodon-binding domain and the C-terminal extension.</text>
</comment>
<comment type="similarity">
    <text evidence="1">Belongs to the class-II aminoacyl-tRNA synthetase family. ProS type 3 subfamily.</text>
</comment>
<proteinExistence type="inferred from homology"/>
<reference key="1">
    <citation type="journal article" date="2002" name="Nucleic Acids Res.">
        <title>The complete genomic sequence of Mycoplasma penetrans, an intracellular bacterial pathogen in humans.</title>
        <authorList>
            <person name="Sasaki Y."/>
            <person name="Ishikawa J."/>
            <person name="Yamashita A."/>
            <person name="Oshima K."/>
            <person name="Kenri T."/>
            <person name="Furuya K."/>
            <person name="Yoshino C."/>
            <person name="Horino A."/>
            <person name="Shiba T."/>
            <person name="Sasaki T."/>
            <person name="Hattori M."/>
        </authorList>
    </citation>
    <scope>NUCLEOTIDE SEQUENCE [LARGE SCALE GENOMIC DNA]</scope>
    <source>
        <strain>HF-2</strain>
    </source>
</reference>